<accession>Q920N9</accession>
<dbReference type="EC" id="1.1.1.10"/>
<dbReference type="EMBL" id="AB061720">
    <property type="protein sequence ID" value="BAB64341.1"/>
    <property type="molecule type" value="mRNA"/>
</dbReference>
<dbReference type="RefSeq" id="NP_001166413.1">
    <property type="nucleotide sequence ID" value="NM_001172942.1"/>
</dbReference>
<dbReference type="SMR" id="Q920N9"/>
<dbReference type="FunCoup" id="Q920N9">
    <property type="interactions" value="378"/>
</dbReference>
<dbReference type="STRING" id="10141.ENSCPOP00000027641"/>
<dbReference type="GeneID" id="100712804"/>
<dbReference type="CTD" id="51181"/>
<dbReference type="InParanoid" id="Q920N9"/>
<dbReference type="OrthoDB" id="1393670at2759"/>
<dbReference type="BRENDA" id="1.1.1.10">
    <property type="organism ID" value="1225"/>
</dbReference>
<dbReference type="SABIO-RK" id="Q920N9"/>
<dbReference type="Proteomes" id="UP000005447">
    <property type="component" value="Unassembled WGS sequence"/>
</dbReference>
<dbReference type="GO" id="GO:0005881">
    <property type="term" value="C:cytoplasmic microtubule"/>
    <property type="evidence" value="ECO:0000250"/>
    <property type="project" value="UniProtKB"/>
</dbReference>
<dbReference type="GO" id="GO:0016020">
    <property type="term" value="C:membrane"/>
    <property type="evidence" value="ECO:0007669"/>
    <property type="project" value="UniProtKB-SubCell"/>
</dbReference>
<dbReference type="GO" id="GO:0004090">
    <property type="term" value="F:carbonyl reductase (NADPH) activity"/>
    <property type="evidence" value="ECO:0007669"/>
    <property type="project" value="TreeGrafter"/>
</dbReference>
<dbReference type="GO" id="GO:0050038">
    <property type="term" value="F:L-xylulose reductase (NADPH) activity"/>
    <property type="evidence" value="ECO:0000314"/>
    <property type="project" value="UniProtKB"/>
</dbReference>
<dbReference type="GO" id="GO:0042732">
    <property type="term" value="P:D-xylose metabolic process"/>
    <property type="evidence" value="ECO:0007669"/>
    <property type="project" value="UniProtKB-KW"/>
</dbReference>
<dbReference type="GO" id="GO:0006006">
    <property type="term" value="P:glucose metabolic process"/>
    <property type="evidence" value="ECO:0000314"/>
    <property type="project" value="UniProtKB"/>
</dbReference>
<dbReference type="GO" id="GO:0005997">
    <property type="term" value="P:xylulose metabolic process"/>
    <property type="evidence" value="ECO:0000314"/>
    <property type="project" value="UniProtKB"/>
</dbReference>
<dbReference type="CDD" id="cd05351">
    <property type="entry name" value="XR_like_SDR_c"/>
    <property type="match status" value="1"/>
</dbReference>
<dbReference type="FunFam" id="3.40.50.720:FF:000214">
    <property type="entry name" value="L-xylulose reductase"/>
    <property type="match status" value="1"/>
</dbReference>
<dbReference type="Gene3D" id="3.40.50.720">
    <property type="entry name" value="NAD(P)-binding Rossmann-like Domain"/>
    <property type="match status" value="1"/>
</dbReference>
<dbReference type="InterPro" id="IPR051737">
    <property type="entry name" value="L-xylulose/Carbonyl_redctase"/>
</dbReference>
<dbReference type="InterPro" id="IPR036291">
    <property type="entry name" value="NAD(P)-bd_dom_sf"/>
</dbReference>
<dbReference type="InterPro" id="IPR020904">
    <property type="entry name" value="Sc_DH/Rdtase_CS"/>
</dbReference>
<dbReference type="InterPro" id="IPR002347">
    <property type="entry name" value="SDR_fam"/>
</dbReference>
<dbReference type="PANTHER" id="PTHR44252">
    <property type="entry name" value="D-ERYTHRULOSE REDUCTASE"/>
    <property type="match status" value="1"/>
</dbReference>
<dbReference type="PANTHER" id="PTHR44252:SF2">
    <property type="entry name" value="L-XYLULOSE REDUCTASE"/>
    <property type="match status" value="1"/>
</dbReference>
<dbReference type="Pfam" id="PF13561">
    <property type="entry name" value="adh_short_C2"/>
    <property type="match status" value="1"/>
</dbReference>
<dbReference type="PRINTS" id="PR00081">
    <property type="entry name" value="GDHRDH"/>
</dbReference>
<dbReference type="PRINTS" id="PR00080">
    <property type="entry name" value="SDRFAMILY"/>
</dbReference>
<dbReference type="SUPFAM" id="SSF51735">
    <property type="entry name" value="NAD(P)-binding Rossmann-fold domains"/>
    <property type="match status" value="1"/>
</dbReference>
<dbReference type="PROSITE" id="PS00061">
    <property type="entry name" value="ADH_SHORT"/>
    <property type="match status" value="1"/>
</dbReference>
<organism>
    <name type="scientific">Cavia porcellus</name>
    <name type="common">Guinea pig</name>
    <dbReference type="NCBI Taxonomy" id="10141"/>
    <lineage>
        <taxon>Eukaryota</taxon>
        <taxon>Metazoa</taxon>
        <taxon>Chordata</taxon>
        <taxon>Craniata</taxon>
        <taxon>Vertebrata</taxon>
        <taxon>Euteleostomi</taxon>
        <taxon>Mammalia</taxon>
        <taxon>Eutheria</taxon>
        <taxon>Euarchontoglires</taxon>
        <taxon>Glires</taxon>
        <taxon>Rodentia</taxon>
        <taxon>Hystricomorpha</taxon>
        <taxon>Caviidae</taxon>
        <taxon>Cavia</taxon>
    </lineage>
</organism>
<feature type="chain" id="PRO_0000054553" description="L-xylulose reductase">
    <location>
        <begin position="1"/>
        <end position="244"/>
    </location>
</feature>
<feature type="active site" description="Proton acceptor" evidence="3">
    <location>
        <position position="149"/>
    </location>
</feature>
<feature type="active site" evidence="1">
    <location>
        <position position="153"/>
    </location>
</feature>
<feature type="binding site" evidence="1">
    <location>
        <begin position="11"/>
        <end position="39"/>
    </location>
    <ligand>
        <name>NADP(+)</name>
        <dbReference type="ChEBI" id="CHEBI:58349"/>
    </ligand>
</feature>
<feature type="binding site" evidence="1">
    <location>
        <position position="136"/>
    </location>
    <ligand>
        <name>substrate</name>
    </ligand>
</feature>
<feature type="modified residue" description="N-acetylmethionine" evidence="2">
    <location>
        <position position="1"/>
    </location>
</feature>
<feature type="modified residue" description="Omega-N-methylarginine" evidence="2">
    <location>
        <position position="21"/>
    </location>
</feature>
<gene>
    <name type="primary">DCXR</name>
    <name type="synonym">GLB</name>
</gene>
<evidence type="ECO:0000250" key="1"/>
<evidence type="ECO:0000250" key="2">
    <source>
        <dbReference type="UniProtKB" id="Q7Z4W1"/>
    </source>
</evidence>
<evidence type="ECO:0000255" key="3">
    <source>
        <dbReference type="PROSITE-ProRule" id="PRU10001"/>
    </source>
</evidence>
<evidence type="ECO:0000269" key="4">
    <source>
    </source>
</evidence>
<evidence type="ECO:0000305" key="5"/>
<protein>
    <recommendedName>
        <fullName>L-xylulose reductase</fullName>
        <shortName>XR</shortName>
        <ecNumber>1.1.1.10</ecNumber>
    </recommendedName>
    <alternativeName>
        <fullName>Dicarbonyl/L-xylulose reductase</fullName>
    </alternativeName>
    <alternativeName>
        <fullName>Protein P26h</fullName>
    </alternativeName>
</protein>
<sequence length="244" mass="25750">MDLGLAGRRALVTGAGKGIGRSTVLALKAAGAQVVAVSRTREDLDDLVRECPGVEPVCVDLADWEATEQALSNVGPADLLVNNAAVALLQPFLEVTKEACVTSFNVNLRAVIQVSQIVAKGMIARGVPGAIVNVSSQASQRALTNHTVYCSTKGALYMLTKMMALELGPHKIRVNAVNPTVVMTPMGRTNWSDPHKAKAMLDRIPLGKFAEVENVVDTILFLLSNRSGMTTGSTLPVDGGFLAT</sequence>
<proteinExistence type="evidence at transcript level"/>
<reference key="1">
    <citation type="journal article" date="2002" name="J. Biol. Chem.">
        <title>Molecular characterization of mammalian dicarbonyl/L-xylulose reductase and its localization in kidney.</title>
        <authorList>
            <person name="Nakagawa J."/>
            <person name="Ishikura S."/>
            <person name="Asami J."/>
            <person name="Isaji T."/>
            <person name="Usami N."/>
            <person name="Hara A."/>
            <person name="Sakurai T."/>
            <person name="Tsuritani K."/>
            <person name="Oda K."/>
            <person name="Takahashi M."/>
            <person name="Yoshimoto M."/>
            <person name="Otsuka N."/>
            <person name="Kitamura K."/>
        </authorList>
    </citation>
    <scope>NUCLEOTIDE SEQUENCE [MRNA]</scope>
    <scope>ENZYME ACTIVITY</scope>
    <scope>TISSUE SPECIFICITY</scope>
    <source>
        <strain>Hartley</strain>
        <tissue>Liver</tissue>
    </source>
</reference>
<keyword id="KW-0007">Acetylation</keyword>
<keyword id="KW-0119">Carbohydrate metabolism</keyword>
<keyword id="KW-0313">Glucose metabolism</keyword>
<keyword id="KW-0472">Membrane</keyword>
<keyword id="KW-0488">Methylation</keyword>
<keyword id="KW-0521">NADP</keyword>
<keyword id="KW-0560">Oxidoreductase</keyword>
<keyword id="KW-1185">Reference proteome</keyword>
<keyword id="KW-0859">Xylose metabolism</keyword>
<name>DCXR_CAVPO</name>
<comment type="function">
    <text>Catalyzes the NADPH-dependent reduction of several pentoses, tetroses, trioses, alpha-dicarbonyl compounds and L-xylulose. Participates in the uronate cycle of glucose metabolism. May play a role in the water absorption and cellular osmoregulation in the proximal renal tubules by producing xylitol, an osmolyte, thereby preventing osmolytic stress from occurring in the renal tubules.</text>
</comment>
<comment type="catalytic activity">
    <reaction evidence="4">
        <text>xylitol + NADP(+) = L-xylulose + NADPH + H(+)</text>
        <dbReference type="Rhea" id="RHEA:17025"/>
        <dbReference type="ChEBI" id="CHEBI:15378"/>
        <dbReference type="ChEBI" id="CHEBI:17151"/>
        <dbReference type="ChEBI" id="CHEBI:17399"/>
        <dbReference type="ChEBI" id="CHEBI:57783"/>
        <dbReference type="ChEBI" id="CHEBI:58349"/>
        <dbReference type="EC" id="1.1.1.10"/>
    </reaction>
</comment>
<comment type="subunit">
    <text>Homotetramer.</text>
</comment>
<comment type="subcellular location">
    <subcellularLocation>
        <location evidence="1">Membrane</location>
        <topology evidence="1">Peripheral membrane protein</topology>
    </subcellularLocation>
    <text evidence="1">Probably recruited to membranes via an interaction with phosphatidylinositol.</text>
</comment>
<comment type="tissue specificity">
    <text evidence="4">Highly expressed in kidney and liver. Expressed in epididymis. Expressed at intermediate level in lung. Weakly expressed in brain, heart, spleen and testis.</text>
</comment>
<comment type="similarity">
    <text evidence="5">Belongs to the short-chain dehydrogenases/reductases (SDR) family.</text>
</comment>